<feature type="chain" id="PRO_0000054702" description="5-keto-D-gluconate 5-reductase">
    <location>
        <begin position="1"/>
        <end position="254"/>
    </location>
</feature>
<feature type="active site" description="Proton acceptor" evidence="2">
    <location>
        <position position="158"/>
    </location>
</feature>
<feature type="binding site" evidence="1">
    <location>
        <begin position="13"/>
        <end position="37"/>
    </location>
    <ligand>
        <name>NADP(+)</name>
        <dbReference type="ChEBI" id="CHEBI:58349"/>
    </ligand>
</feature>
<feature type="binding site" evidence="1">
    <location>
        <position position="145"/>
    </location>
    <ligand>
        <name>substrate</name>
    </ligand>
</feature>
<proteinExistence type="evidence at protein level"/>
<accession>P0A9P9</accession>
<accession>P39345</accession>
<accession>Q2M643</accession>
<keyword id="KW-0119">Carbohydrate metabolism</keyword>
<keyword id="KW-0520">NAD</keyword>
<keyword id="KW-0521">NADP</keyword>
<keyword id="KW-0560">Oxidoreductase</keyword>
<keyword id="KW-1185">Reference proteome</keyword>
<organism>
    <name type="scientific">Escherichia coli (strain K12)</name>
    <dbReference type="NCBI Taxonomy" id="83333"/>
    <lineage>
        <taxon>Bacteria</taxon>
        <taxon>Pseudomonadati</taxon>
        <taxon>Pseudomonadota</taxon>
        <taxon>Gammaproteobacteria</taxon>
        <taxon>Enterobacterales</taxon>
        <taxon>Enterobacteriaceae</taxon>
        <taxon>Escherichia</taxon>
    </lineage>
</organism>
<protein>
    <recommendedName>
        <fullName evidence="4">5-keto-D-gluconate 5-reductase</fullName>
        <ecNumber evidence="3">1.1.1.69</ecNumber>
    </recommendedName>
</protein>
<dbReference type="EC" id="1.1.1.69" evidence="3"/>
<dbReference type="EMBL" id="U14003">
    <property type="protein sequence ID" value="AAA97163.1"/>
    <property type="molecule type" value="Genomic_DNA"/>
</dbReference>
<dbReference type="EMBL" id="U00096">
    <property type="protein sequence ID" value="AAC77223.1"/>
    <property type="molecule type" value="Genomic_DNA"/>
</dbReference>
<dbReference type="EMBL" id="AP009048">
    <property type="protein sequence ID" value="BAE78263.1"/>
    <property type="molecule type" value="Genomic_DNA"/>
</dbReference>
<dbReference type="PIR" id="S56492">
    <property type="entry name" value="S56492"/>
</dbReference>
<dbReference type="RefSeq" id="NP_418687.1">
    <property type="nucleotide sequence ID" value="NC_000913.3"/>
</dbReference>
<dbReference type="RefSeq" id="WP_000998695.1">
    <property type="nucleotide sequence ID" value="NZ_SSUV01000014.1"/>
</dbReference>
<dbReference type="SMR" id="P0A9P9"/>
<dbReference type="BioGRID" id="4262730">
    <property type="interactions" value="15"/>
</dbReference>
<dbReference type="BioGRID" id="851444">
    <property type="interactions" value="2"/>
</dbReference>
<dbReference type="FunCoup" id="P0A9P9">
    <property type="interactions" value="508"/>
</dbReference>
<dbReference type="IntAct" id="P0A9P9">
    <property type="interactions" value="7"/>
</dbReference>
<dbReference type="STRING" id="511145.b4266"/>
<dbReference type="jPOST" id="P0A9P9"/>
<dbReference type="PaxDb" id="511145-b4266"/>
<dbReference type="EnsemblBacteria" id="AAC77223">
    <property type="protein sequence ID" value="AAC77223"/>
    <property type="gene ID" value="b4266"/>
</dbReference>
<dbReference type="GeneID" id="947109"/>
<dbReference type="KEGG" id="ecj:JW4223"/>
<dbReference type="KEGG" id="eco:b4266"/>
<dbReference type="KEGG" id="ecoc:C3026_23010"/>
<dbReference type="PATRIC" id="fig|1411691.4.peg.2437"/>
<dbReference type="EchoBASE" id="EB2429"/>
<dbReference type="eggNOG" id="COG1028">
    <property type="taxonomic scope" value="Bacteria"/>
</dbReference>
<dbReference type="HOGENOM" id="CLU_010194_1_1_6"/>
<dbReference type="InParanoid" id="P0A9P9"/>
<dbReference type="OMA" id="EYACTWS"/>
<dbReference type="OrthoDB" id="286404at2"/>
<dbReference type="PhylomeDB" id="P0A9P9"/>
<dbReference type="BioCyc" id="EcoCyc:GLUCONREDUCT-MONOMER"/>
<dbReference type="BioCyc" id="MetaCyc:GLUCONREDUCT-MONOMER"/>
<dbReference type="UniPathway" id="UPA00793"/>
<dbReference type="PRO" id="PR:P0A9P9"/>
<dbReference type="Proteomes" id="UP000000625">
    <property type="component" value="Chromosome"/>
</dbReference>
<dbReference type="GO" id="GO:0008874">
    <property type="term" value="F:gluconate 5-dehydrogenase activity"/>
    <property type="evidence" value="ECO:0000314"/>
    <property type="project" value="EcoCyc"/>
</dbReference>
<dbReference type="GO" id="GO:0042803">
    <property type="term" value="F:protein homodimerization activity"/>
    <property type="evidence" value="ECO:0000314"/>
    <property type="project" value="EcoCyc"/>
</dbReference>
<dbReference type="GO" id="GO:0046183">
    <property type="term" value="P:L-idonate catabolic process"/>
    <property type="evidence" value="ECO:0000270"/>
    <property type="project" value="EcoCyc"/>
</dbReference>
<dbReference type="CDD" id="cd05347">
    <property type="entry name" value="Ga5DH-like_SDR_c"/>
    <property type="match status" value="1"/>
</dbReference>
<dbReference type="FunFam" id="3.40.50.720:FF:000210">
    <property type="entry name" value="Gluconate 5-dehydrogenase"/>
    <property type="match status" value="1"/>
</dbReference>
<dbReference type="Gene3D" id="3.40.50.720">
    <property type="entry name" value="NAD(P)-binding Rossmann-like Domain"/>
    <property type="match status" value="1"/>
</dbReference>
<dbReference type="InterPro" id="IPR036291">
    <property type="entry name" value="NAD(P)-bd_dom_sf"/>
</dbReference>
<dbReference type="InterPro" id="IPR020904">
    <property type="entry name" value="Sc_DH/Rdtase_CS"/>
</dbReference>
<dbReference type="InterPro" id="IPR002347">
    <property type="entry name" value="SDR_fam"/>
</dbReference>
<dbReference type="NCBIfam" id="NF005559">
    <property type="entry name" value="PRK07231.1"/>
    <property type="match status" value="1"/>
</dbReference>
<dbReference type="NCBIfam" id="NF005983">
    <property type="entry name" value="PRK08085.1"/>
    <property type="match status" value="1"/>
</dbReference>
<dbReference type="PANTHER" id="PTHR43669">
    <property type="entry name" value="5-KETO-D-GLUCONATE 5-REDUCTASE"/>
    <property type="match status" value="1"/>
</dbReference>
<dbReference type="PANTHER" id="PTHR43669:SF9">
    <property type="entry name" value="5-KETO-D-GLUCONATE 5-REDUCTASE"/>
    <property type="match status" value="1"/>
</dbReference>
<dbReference type="Pfam" id="PF00106">
    <property type="entry name" value="adh_short"/>
    <property type="match status" value="1"/>
</dbReference>
<dbReference type="PRINTS" id="PR00081">
    <property type="entry name" value="GDHRDH"/>
</dbReference>
<dbReference type="PRINTS" id="PR00080">
    <property type="entry name" value="SDRFAMILY"/>
</dbReference>
<dbReference type="SUPFAM" id="SSF51735">
    <property type="entry name" value="NAD(P)-binding Rossmann-fold domains"/>
    <property type="match status" value="1"/>
</dbReference>
<dbReference type="PROSITE" id="PS00061">
    <property type="entry name" value="ADH_SHORT"/>
    <property type="match status" value="1"/>
</dbReference>
<reference key="1">
    <citation type="journal article" date="1995" name="Nucleic Acids Res.">
        <title>Analysis of the Escherichia coli genome VI: DNA sequence of the region from 92.8 through 100 minutes.</title>
        <authorList>
            <person name="Burland V.D."/>
            <person name="Plunkett G. III"/>
            <person name="Sofia H.J."/>
            <person name="Daniels D.L."/>
            <person name="Blattner F.R."/>
        </authorList>
    </citation>
    <scope>NUCLEOTIDE SEQUENCE [LARGE SCALE GENOMIC DNA]</scope>
    <source>
        <strain>K12 / MG1655 / ATCC 47076</strain>
    </source>
</reference>
<reference key="2">
    <citation type="journal article" date="1997" name="Science">
        <title>The complete genome sequence of Escherichia coli K-12.</title>
        <authorList>
            <person name="Blattner F.R."/>
            <person name="Plunkett G. III"/>
            <person name="Bloch C.A."/>
            <person name="Perna N.T."/>
            <person name="Burland V."/>
            <person name="Riley M."/>
            <person name="Collado-Vides J."/>
            <person name="Glasner J.D."/>
            <person name="Rode C.K."/>
            <person name="Mayhew G.F."/>
            <person name="Gregor J."/>
            <person name="Davis N.W."/>
            <person name="Kirkpatrick H.A."/>
            <person name="Goeden M.A."/>
            <person name="Rose D.J."/>
            <person name="Mau B."/>
            <person name="Shao Y."/>
        </authorList>
    </citation>
    <scope>NUCLEOTIDE SEQUENCE [LARGE SCALE GENOMIC DNA]</scope>
    <source>
        <strain>K12 / MG1655 / ATCC 47076</strain>
    </source>
</reference>
<reference key="3">
    <citation type="journal article" date="2006" name="Mol. Syst. Biol.">
        <title>Highly accurate genome sequences of Escherichia coli K-12 strains MG1655 and W3110.</title>
        <authorList>
            <person name="Hayashi K."/>
            <person name="Morooka N."/>
            <person name="Yamamoto Y."/>
            <person name="Fujita K."/>
            <person name="Isono K."/>
            <person name="Choi S."/>
            <person name="Ohtsubo E."/>
            <person name="Baba T."/>
            <person name="Wanner B.L."/>
            <person name="Mori H."/>
            <person name="Horiuchi T."/>
        </authorList>
    </citation>
    <scope>NUCLEOTIDE SEQUENCE [LARGE SCALE GENOMIC DNA]</scope>
    <source>
        <strain>K12 / W3110 / ATCC 27325 / DSM 5911</strain>
    </source>
</reference>
<reference key="4">
    <citation type="journal article" date="1998" name="J. Bacteriol.">
        <title>Sequence analysis of the GntII (subsidiary) system for gluconate metabolism reveals a novel pathway for L-idonic acid catabolism in Escherichia coli.</title>
        <authorList>
            <person name="Bausch C."/>
            <person name="Peekhaus N."/>
            <person name="Utz C."/>
            <person name="Blais T."/>
            <person name="Murray E."/>
            <person name="Lowary T."/>
            <person name="Conway T."/>
        </authorList>
    </citation>
    <scope>FUNCTION</scope>
    <scope>CATALYTIC ACTIVITY</scope>
    <scope>BIOPHYSICOCHEMICAL PROPERTIES</scope>
    <scope>PATHWAY</scope>
    <scope>INDUCTION</scope>
    <source>
        <strain>K12 / ATCC 12435 / DSM 5695 / NBRC 3302 / NCIMB 9481 / W1485</strain>
    </source>
</reference>
<gene>
    <name evidence="4" type="primary">idnO</name>
    <name type="synonym">yjgU</name>
    <name type="ordered locus">b4266</name>
    <name type="ordered locus">JW4223</name>
</gene>
<sequence length="254" mass="27563">MNDLFSLAGKNILITGSAQGIGFLLATGLGKYGAQIIINDITAERAELAVEKLHQEGIQAVAAPFNVTHKHEIDAAVEHIEKDIGPIDVLVNNAGIQRRHPFTEFPEQEWNDVIAVNQTAVFLVSQAVTRHMVERKAGKVINICSMQSELGRDTITPYAASKGAVKMLTRGMCVELARHNIQVNGIAPGYFKTEMTKALVEDEAFTAWLCKRTPAARWGDPQELIGAAVFLSSKASDFVNGHLLFVDGGMLVAV</sequence>
<name>IDNO_ECOLI</name>
<comment type="function">
    <text evidence="3">Catalyzes the reduction of 5-keto-D-gluconate to D-gluconate, using either NADH or NADPH. Is likely involved in an L-idonate degradation pathway that allows E.coli to utilize L-idonate as the sole carbon and energy source. Is also able to catalyze the reverse reaction in vitro, but the D-gluconate oxidation by the enzyme can only proceed with NAD.</text>
</comment>
<comment type="catalytic activity">
    <reaction evidence="3">
        <text>D-gluconate + NAD(+) = 5-dehydro-D-gluconate + NADH + H(+)</text>
        <dbReference type="Rhea" id="RHEA:23940"/>
        <dbReference type="ChEBI" id="CHEBI:15378"/>
        <dbReference type="ChEBI" id="CHEBI:18391"/>
        <dbReference type="ChEBI" id="CHEBI:57540"/>
        <dbReference type="ChEBI" id="CHEBI:57945"/>
        <dbReference type="ChEBI" id="CHEBI:58143"/>
        <dbReference type="EC" id="1.1.1.69"/>
    </reaction>
</comment>
<comment type="catalytic activity">
    <reaction evidence="3">
        <text>D-gluconate + NADP(+) = 5-dehydro-D-gluconate + NADPH + H(+)</text>
        <dbReference type="Rhea" id="RHEA:23936"/>
        <dbReference type="ChEBI" id="CHEBI:15378"/>
        <dbReference type="ChEBI" id="CHEBI:18391"/>
        <dbReference type="ChEBI" id="CHEBI:57783"/>
        <dbReference type="ChEBI" id="CHEBI:58143"/>
        <dbReference type="ChEBI" id="CHEBI:58349"/>
        <dbReference type="EC" id="1.1.1.69"/>
    </reaction>
</comment>
<comment type="biophysicochemical properties">
    <kinetics>
        <KM evidence="3">0.5 mM for 5-keto-D-gluconate</KM>
        <KM evidence="3">2 mM for D-gluconate</KM>
    </kinetics>
</comment>
<comment type="pathway">
    <text evidence="6">Carbohydrate acid metabolism; L-idonate degradation.</text>
</comment>
<comment type="induction">
    <text evidence="3">Is up-regulated by L-idonate (15-fold) and by 5-ketogluconate (80-fold). Seems to be catabolite repressed. Is probably under the control of the positive regulator IdnR. Is part of the idnDOTR operon.</text>
</comment>
<comment type="similarity">
    <text evidence="5">Belongs to the short-chain dehydrogenases/reductases (SDR) family.</text>
</comment>
<evidence type="ECO:0000250" key="1"/>
<evidence type="ECO:0000255" key="2">
    <source>
        <dbReference type="PROSITE-ProRule" id="PRU10001"/>
    </source>
</evidence>
<evidence type="ECO:0000269" key="3">
    <source>
    </source>
</evidence>
<evidence type="ECO:0000303" key="4">
    <source>
    </source>
</evidence>
<evidence type="ECO:0000305" key="5"/>
<evidence type="ECO:0000305" key="6">
    <source>
    </source>
</evidence>